<accession>B9LZK2</accession>
<proteinExistence type="inferred from homology"/>
<feature type="chain" id="PRO_1000164571" description="Orotidine 5'-phosphate decarboxylase">
    <location>
        <begin position="1"/>
        <end position="239"/>
    </location>
</feature>
<feature type="active site" description="Proton donor" evidence="1">
    <location>
        <position position="66"/>
    </location>
</feature>
<feature type="binding site" evidence="1">
    <location>
        <position position="15"/>
    </location>
    <ligand>
        <name>substrate</name>
    </ligand>
</feature>
<feature type="binding site" evidence="1">
    <location>
        <position position="37"/>
    </location>
    <ligand>
        <name>substrate</name>
    </ligand>
</feature>
<feature type="binding site" evidence="1">
    <location>
        <begin position="64"/>
        <end position="73"/>
    </location>
    <ligand>
        <name>substrate</name>
    </ligand>
</feature>
<feature type="binding site" evidence="1">
    <location>
        <position position="126"/>
    </location>
    <ligand>
        <name>substrate</name>
    </ligand>
</feature>
<feature type="binding site" evidence="1">
    <location>
        <position position="187"/>
    </location>
    <ligand>
        <name>substrate</name>
    </ligand>
</feature>
<feature type="binding site" evidence="1">
    <location>
        <position position="196"/>
    </location>
    <ligand>
        <name>substrate</name>
    </ligand>
</feature>
<feature type="binding site" evidence="1">
    <location>
        <position position="216"/>
    </location>
    <ligand>
        <name>substrate</name>
    </ligand>
</feature>
<feature type="binding site" evidence="1">
    <location>
        <position position="217"/>
    </location>
    <ligand>
        <name>substrate</name>
    </ligand>
</feature>
<sequence length="239" mass="25577">MTRDEARAKIIFALDVNEFSDVEKWADLLSPHVGMFKVGKQLYTACGPAVVRMIQKYGGEVFLDLKYHDIPNTVAMASLEAARMGVKLFNLHALGGYEMMAKTVETLDKEFKGEERGKVLAVTILTSSNEQTLQEVGINLPVPEMVVKLAALAKKAGIDGVVASPQEVPLIREACGNDFLIVTPGVRPAFAAADDQKRIMTPAEAVKSGADYLVIGRPIAAAPNPAEAAQAIVAEIVAG</sequence>
<dbReference type="EC" id="4.1.1.23" evidence="1"/>
<dbReference type="EMBL" id="CP001390">
    <property type="protein sequence ID" value="ACM20755.1"/>
    <property type="molecule type" value="Genomic_DNA"/>
</dbReference>
<dbReference type="RefSeq" id="WP_012647484.1">
    <property type="nucleotide sequence ID" value="NC_011979.1"/>
</dbReference>
<dbReference type="SMR" id="B9LZK2"/>
<dbReference type="STRING" id="316067.Geob_2402"/>
<dbReference type="KEGG" id="geo:Geob_2402"/>
<dbReference type="eggNOG" id="COG0284">
    <property type="taxonomic scope" value="Bacteria"/>
</dbReference>
<dbReference type="HOGENOM" id="CLU_067069_0_0_7"/>
<dbReference type="OrthoDB" id="9806203at2"/>
<dbReference type="UniPathway" id="UPA00070">
    <property type="reaction ID" value="UER00120"/>
</dbReference>
<dbReference type="Proteomes" id="UP000007721">
    <property type="component" value="Chromosome"/>
</dbReference>
<dbReference type="GO" id="GO:0005829">
    <property type="term" value="C:cytosol"/>
    <property type="evidence" value="ECO:0007669"/>
    <property type="project" value="TreeGrafter"/>
</dbReference>
<dbReference type="GO" id="GO:0004590">
    <property type="term" value="F:orotidine-5'-phosphate decarboxylase activity"/>
    <property type="evidence" value="ECO:0007669"/>
    <property type="project" value="UniProtKB-UniRule"/>
</dbReference>
<dbReference type="GO" id="GO:0006207">
    <property type="term" value="P:'de novo' pyrimidine nucleobase biosynthetic process"/>
    <property type="evidence" value="ECO:0007669"/>
    <property type="project" value="InterPro"/>
</dbReference>
<dbReference type="GO" id="GO:0044205">
    <property type="term" value="P:'de novo' UMP biosynthetic process"/>
    <property type="evidence" value="ECO:0007669"/>
    <property type="project" value="UniProtKB-UniRule"/>
</dbReference>
<dbReference type="CDD" id="cd04725">
    <property type="entry name" value="OMP_decarboxylase_like"/>
    <property type="match status" value="1"/>
</dbReference>
<dbReference type="FunFam" id="3.20.20.70:FF:000015">
    <property type="entry name" value="Orotidine 5'-phosphate decarboxylase"/>
    <property type="match status" value="1"/>
</dbReference>
<dbReference type="Gene3D" id="3.20.20.70">
    <property type="entry name" value="Aldolase class I"/>
    <property type="match status" value="1"/>
</dbReference>
<dbReference type="HAMAP" id="MF_01200_B">
    <property type="entry name" value="OMPdecase_type1_B"/>
    <property type="match status" value="1"/>
</dbReference>
<dbReference type="InterPro" id="IPR013785">
    <property type="entry name" value="Aldolase_TIM"/>
</dbReference>
<dbReference type="InterPro" id="IPR014732">
    <property type="entry name" value="OMPdecase"/>
</dbReference>
<dbReference type="InterPro" id="IPR018089">
    <property type="entry name" value="OMPdecase_AS"/>
</dbReference>
<dbReference type="InterPro" id="IPR047596">
    <property type="entry name" value="OMPdecase_bac"/>
</dbReference>
<dbReference type="InterPro" id="IPR001754">
    <property type="entry name" value="OMPdeCOase_dom"/>
</dbReference>
<dbReference type="InterPro" id="IPR011060">
    <property type="entry name" value="RibuloseP-bd_barrel"/>
</dbReference>
<dbReference type="NCBIfam" id="NF001273">
    <property type="entry name" value="PRK00230.1"/>
    <property type="match status" value="1"/>
</dbReference>
<dbReference type="NCBIfam" id="TIGR01740">
    <property type="entry name" value="pyrF"/>
    <property type="match status" value="1"/>
</dbReference>
<dbReference type="PANTHER" id="PTHR32119">
    <property type="entry name" value="OROTIDINE 5'-PHOSPHATE DECARBOXYLASE"/>
    <property type="match status" value="1"/>
</dbReference>
<dbReference type="PANTHER" id="PTHR32119:SF2">
    <property type="entry name" value="OROTIDINE 5'-PHOSPHATE DECARBOXYLASE"/>
    <property type="match status" value="1"/>
</dbReference>
<dbReference type="Pfam" id="PF00215">
    <property type="entry name" value="OMPdecase"/>
    <property type="match status" value="1"/>
</dbReference>
<dbReference type="SMART" id="SM00934">
    <property type="entry name" value="OMPdecase"/>
    <property type="match status" value="1"/>
</dbReference>
<dbReference type="SUPFAM" id="SSF51366">
    <property type="entry name" value="Ribulose-phoshate binding barrel"/>
    <property type="match status" value="1"/>
</dbReference>
<dbReference type="PROSITE" id="PS00156">
    <property type="entry name" value="OMPDECASE"/>
    <property type="match status" value="1"/>
</dbReference>
<evidence type="ECO:0000255" key="1">
    <source>
        <dbReference type="HAMAP-Rule" id="MF_01200"/>
    </source>
</evidence>
<gene>
    <name evidence="1" type="primary">pyrF</name>
    <name type="ordered locus">Geob_2402</name>
</gene>
<comment type="function">
    <text evidence="1">Catalyzes the decarboxylation of orotidine 5'-monophosphate (OMP) to uridine 5'-monophosphate (UMP).</text>
</comment>
<comment type="catalytic activity">
    <reaction evidence="1">
        <text>orotidine 5'-phosphate + H(+) = UMP + CO2</text>
        <dbReference type="Rhea" id="RHEA:11596"/>
        <dbReference type="ChEBI" id="CHEBI:15378"/>
        <dbReference type="ChEBI" id="CHEBI:16526"/>
        <dbReference type="ChEBI" id="CHEBI:57538"/>
        <dbReference type="ChEBI" id="CHEBI:57865"/>
        <dbReference type="EC" id="4.1.1.23"/>
    </reaction>
</comment>
<comment type="pathway">
    <text evidence="1">Pyrimidine metabolism; UMP biosynthesis via de novo pathway; UMP from orotate: step 2/2.</text>
</comment>
<comment type="subunit">
    <text evidence="1">Homodimer.</text>
</comment>
<comment type="similarity">
    <text evidence="1">Belongs to the OMP decarboxylase family. Type 1 subfamily.</text>
</comment>
<name>PYRF_GEODF</name>
<reference key="1">
    <citation type="submission" date="2009-01" db="EMBL/GenBank/DDBJ databases">
        <title>Complete sequence of Geobacter sp. FRC-32.</title>
        <authorList>
            <consortium name="US DOE Joint Genome Institute"/>
            <person name="Lucas S."/>
            <person name="Copeland A."/>
            <person name="Lapidus A."/>
            <person name="Glavina del Rio T."/>
            <person name="Dalin E."/>
            <person name="Tice H."/>
            <person name="Bruce D."/>
            <person name="Goodwin L."/>
            <person name="Pitluck S."/>
            <person name="Saunders E."/>
            <person name="Brettin T."/>
            <person name="Detter J.C."/>
            <person name="Han C."/>
            <person name="Larimer F."/>
            <person name="Land M."/>
            <person name="Hauser L."/>
            <person name="Kyrpides N."/>
            <person name="Ovchinnikova G."/>
            <person name="Kostka J."/>
            <person name="Richardson P."/>
        </authorList>
    </citation>
    <scope>NUCLEOTIDE SEQUENCE [LARGE SCALE GENOMIC DNA]</scope>
    <source>
        <strain>DSM 22248 / JCM 15807 / FRC-32</strain>
    </source>
</reference>
<protein>
    <recommendedName>
        <fullName evidence="1">Orotidine 5'-phosphate decarboxylase</fullName>
        <ecNumber evidence="1">4.1.1.23</ecNumber>
    </recommendedName>
    <alternativeName>
        <fullName evidence="1">OMP decarboxylase</fullName>
        <shortName evidence="1">OMPDCase</shortName>
        <shortName evidence="1">OMPdecase</shortName>
    </alternativeName>
</protein>
<organism>
    <name type="scientific">Geotalea daltonii (strain DSM 22248 / JCM 15807 / FRC-32)</name>
    <name type="common">Geobacter daltonii</name>
    <dbReference type="NCBI Taxonomy" id="316067"/>
    <lineage>
        <taxon>Bacteria</taxon>
        <taxon>Pseudomonadati</taxon>
        <taxon>Thermodesulfobacteriota</taxon>
        <taxon>Desulfuromonadia</taxon>
        <taxon>Geobacterales</taxon>
        <taxon>Geobacteraceae</taxon>
        <taxon>Geotalea</taxon>
    </lineage>
</organism>
<keyword id="KW-0210">Decarboxylase</keyword>
<keyword id="KW-0456">Lyase</keyword>
<keyword id="KW-0665">Pyrimidine biosynthesis</keyword>
<keyword id="KW-1185">Reference proteome</keyword>